<gene>
    <name evidence="1" type="primary">pfkA</name>
    <name type="ordered locus">lwe1584</name>
</gene>
<sequence>MKRIAILTSGGDAPGMNAATRAVVRKAIYEGLEVYGINYGFLGLVNGDIRKLELGSVGDLLHRGGTFLYSARYPEFATEEGQLKGIEQLKKHQIDGLVVIGGDGSYHGAEALTKRGFPTIGIPGTIDNDISGTDFTIGFDTALNTVLDALDKIRDTATSHERTFIIEVMGRDAGDIALWSGLAGGAEAIIVPEESFNMDDVVDRLNKGRERGKKHSIIVVAEGVMSGNEFAKQLAEYGDYHARVTVLGHVQRGGSPTAFDRVLASRLGARAVELLLENRGGLAVGIRENRIVENNIGEILKEKHTLDQKLFDLASILSI</sequence>
<reference key="1">
    <citation type="journal article" date="2006" name="J. Bacteriol.">
        <title>Whole-genome sequence of Listeria welshimeri reveals common steps in genome reduction with Listeria innocua as compared to Listeria monocytogenes.</title>
        <authorList>
            <person name="Hain T."/>
            <person name="Steinweg C."/>
            <person name="Kuenne C.T."/>
            <person name="Billion A."/>
            <person name="Ghai R."/>
            <person name="Chatterjee S.S."/>
            <person name="Domann E."/>
            <person name="Kaerst U."/>
            <person name="Goesmann A."/>
            <person name="Bekel T."/>
            <person name="Bartels D."/>
            <person name="Kaiser O."/>
            <person name="Meyer F."/>
            <person name="Puehler A."/>
            <person name="Weisshaar B."/>
            <person name="Wehland J."/>
            <person name="Liang C."/>
            <person name="Dandekar T."/>
            <person name="Lampidis R."/>
            <person name="Kreft J."/>
            <person name="Goebel W."/>
            <person name="Chakraborty T."/>
        </authorList>
    </citation>
    <scope>NUCLEOTIDE SEQUENCE [LARGE SCALE GENOMIC DNA]</scope>
    <source>
        <strain>ATCC 35897 / DSM 20650 / CCUG 15529 / CIP 8149 / NCTC 11857 / SLCC 5334 / V8</strain>
    </source>
</reference>
<proteinExistence type="inferred from homology"/>
<keyword id="KW-0021">Allosteric enzyme</keyword>
<keyword id="KW-0067">ATP-binding</keyword>
<keyword id="KW-0963">Cytoplasm</keyword>
<keyword id="KW-0324">Glycolysis</keyword>
<keyword id="KW-0418">Kinase</keyword>
<keyword id="KW-0460">Magnesium</keyword>
<keyword id="KW-0479">Metal-binding</keyword>
<keyword id="KW-0547">Nucleotide-binding</keyword>
<keyword id="KW-0808">Transferase</keyword>
<dbReference type="EC" id="2.7.1.11" evidence="1"/>
<dbReference type="EMBL" id="AM263198">
    <property type="protein sequence ID" value="CAK21002.1"/>
    <property type="molecule type" value="Genomic_DNA"/>
</dbReference>
<dbReference type="RefSeq" id="WP_011702369.1">
    <property type="nucleotide sequence ID" value="NC_008555.1"/>
</dbReference>
<dbReference type="SMR" id="A0AJ20"/>
<dbReference type="STRING" id="386043.lwe1584"/>
<dbReference type="GeneID" id="61189461"/>
<dbReference type="KEGG" id="lwe:lwe1584"/>
<dbReference type="eggNOG" id="COG0205">
    <property type="taxonomic scope" value="Bacteria"/>
</dbReference>
<dbReference type="HOGENOM" id="CLU_020655_0_1_9"/>
<dbReference type="OrthoDB" id="9802503at2"/>
<dbReference type="UniPathway" id="UPA00109">
    <property type="reaction ID" value="UER00182"/>
</dbReference>
<dbReference type="Proteomes" id="UP000000779">
    <property type="component" value="Chromosome"/>
</dbReference>
<dbReference type="GO" id="GO:0005945">
    <property type="term" value="C:6-phosphofructokinase complex"/>
    <property type="evidence" value="ECO:0007669"/>
    <property type="project" value="TreeGrafter"/>
</dbReference>
<dbReference type="GO" id="GO:0003872">
    <property type="term" value="F:6-phosphofructokinase activity"/>
    <property type="evidence" value="ECO:0007669"/>
    <property type="project" value="UniProtKB-UniRule"/>
</dbReference>
<dbReference type="GO" id="GO:0016208">
    <property type="term" value="F:AMP binding"/>
    <property type="evidence" value="ECO:0007669"/>
    <property type="project" value="TreeGrafter"/>
</dbReference>
<dbReference type="GO" id="GO:0005524">
    <property type="term" value="F:ATP binding"/>
    <property type="evidence" value="ECO:0007669"/>
    <property type="project" value="UniProtKB-KW"/>
</dbReference>
<dbReference type="GO" id="GO:0070095">
    <property type="term" value="F:fructose-6-phosphate binding"/>
    <property type="evidence" value="ECO:0007669"/>
    <property type="project" value="TreeGrafter"/>
</dbReference>
<dbReference type="GO" id="GO:0042802">
    <property type="term" value="F:identical protein binding"/>
    <property type="evidence" value="ECO:0007669"/>
    <property type="project" value="TreeGrafter"/>
</dbReference>
<dbReference type="GO" id="GO:0046872">
    <property type="term" value="F:metal ion binding"/>
    <property type="evidence" value="ECO:0007669"/>
    <property type="project" value="UniProtKB-KW"/>
</dbReference>
<dbReference type="GO" id="GO:0048029">
    <property type="term" value="F:monosaccharide binding"/>
    <property type="evidence" value="ECO:0007669"/>
    <property type="project" value="TreeGrafter"/>
</dbReference>
<dbReference type="GO" id="GO:0061621">
    <property type="term" value="P:canonical glycolysis"/>
    <property type="evidence" value="ECO:0007669"/>
    <property type="project" value="TreeGrafter"/>
</dbReference>
<dbReference type="GO" id="GO:0030388">
    <property type="term" value="P:fructose 1,6-bisphosphate metabolic process"/>
    <property type="evidence" value="ECO:0007669"/>
    <property type="project" value="TreeGrafter"/>
</dbReference>
<dbReference type="GO" id="GO:0006002">
    <property type="term" value="P:fructose 6-phosphate metabolic process"/>
    <property type="evidence" value="ECO:0007669"/>
    <property type="project" value="InterPro"/>
</dbReference>
<dbReference type="CDD" id="cd00763">
    <property type="entry name" value="Bacterial_PFK"/>
    <property type="match status" value="1"/>
</dbReference>
<dbReference type="FunFam" id="3.40.50.450:FF:000001">
    <property type="entry name" value="ATP-dependent 6-phosphofructokinase"/>
    <property type="match status" value="1"/>
</dbReference>
<dbReference type="FunFam" id="3.40.50.460:FF:000002">
    <property type="entry name" value="ATP-dependent 6-phosphofructokinase"/>
    <property type="match status" value="1"/>
</dbReference>
<dbReference type="Gene3D" id="3.40.50.450">
    <property type="match status" value="1"/>
</dbReference>
<dbReference type="Gene3D" id="3.40.50.460">
    <property type="entry name" value="Phosphofructokinase domain"/>
    <property type="match status" value="1"/>
</dbReference>
<dbReference type="HAMAP" id="MF_00339">
    <property type="entry name" value="Phosphofructokinase_I_B1"/>
    <property type="match status" value="1"/>
</dbReference>
<dbReference type="InterPro" id="IPR022953">
    <property type="entry name" value="ATP_PFK"/>
</dbReference>
<dbReference type="InterPro" id="IPR012003">
    <property type="entry name" value="ATP_PFK_prok-type"/>
</dbReference>
<dbReference type="InterPro" id="IPR012828">
    <property type="entry name" value="PFKA_ATP_prok"/>
</dbReference>
<dbReference type="InterPro" id="IPR015912">
    <property type="entry name" value="Phosphofructokinase_CS"/>
</dbReference>
<dbReference type="InterPro" id="IPR000023">
    <property type="entry name" value="Phosphofructokinase_dom"/>
</dbReference>
<dbReference type="InterPro" id="IPR035966">
    <property type="entry name" value="PKF_sf"/>
</dbReference>
<dbReference type="NCBIfam" id="TIGR02482">
    <property type="entry name" value="PFKA_ATP"/>
    <property type="match status" value="1"/>
</dbReference>
<dbReference type="NCBIfam" id="NF002872">
    <property type="entry name" value="PRK03202.1"/>
    <property type="match status" value="1"/>
</dbReference>
<dbReference type="PANTHER" id="PTHR13697:SF4">
    <property type="entry name" value="ATP-DEPENDENT 6-PHOSPHOFRUCTOKINASE"/>
    <property type="match status" value="1"/>
</dbReference>
<dbReference type="PANTHER" id="PTHR13697">
    <property type="entry name" value="PHOSPHOFRUCTOKINASE"/>
    <property type="match status" value="1"/>
</dbReference>
<dbReference type="Pfam" id="PF00365">
    <property type="entry name" value="PFK"/>
    <property type="match status" value="1"/>
</dbReference>
<dbReference type="PIRSF" id="PIRSF000532">
    <property type="entry name" value="ATP_PFK_prok"/>
    <property type="match status" value="1"/>
</dbReference>
<dbReference type="PRINTS" id="PR00476">
    <property type="entry name" value="PHFRCTKINASE"/>
</dbReference>
<dbReference type="SUPFAM" id="SSF53784">
    <property type="entry name" value="Phosphofructokinase"/>
    <property type="match status" value="1"/>
</dbReference>
<dbReference type="PROSITE" id="PS00433">
    <property type="entry name" value="PHOSPHOFRUCTOKINASE"/>
    <property type="match status" value="1"/>
</dbReference>
<name>PFKA_LISW6</name>
<feature type="chain" id="PRO_1000059776" description="ATP-dependent 6-phosphofructokinase">
    <location>
        <begin position="1"/>
        <end position="319"/>
    </location>
</feature>
<feature type="active site" description="Proton acceptor" evidence="1">
    <location>
        <position position="127"/>
    </location>
</feature>
<feature type="binding site" evidence="1">
    <location>
        <position position="11"/>
    </location>
    <ligand>
        <name>ATP</name>
        <dbReference type="ChEBI" id="CHEBI:30616"/>
    </ligand>
</feature>
<feature type="binding site" evidence="1">
    <location>
        <begin position="21"/>
        <end position="25"/>
    </location>
    <ligand>
        <name>ADP</name>
        <dbReference type="ChEBI" id="CHEBI:456216"/>
        <note>allosteric activator; ligand shared between dimeric partners</note>
    </ligand>
</feature>
<feature type="binding site" evidence="1">
    <location>
        <begin position="72"/>
        <end position="73"/>
    </location>
    <ligand>
        <name>ATP</name>
        <dbReference type="ChEBI" id="CHEBI:30616"/>
    </ligand>
</feature>
<feature type="binding site" evidence="1">
    <location>
        <begin position="102"/>
        <end position="105"/>
    </location>
    <ligand>
        <name>ATP</name>
        <dbReference type="ChEBI" id="CHEBI:30616"/>
    </ligand>
</feature>
<feature type="binding site" evidence="1">
    <location>
        <position position="103"/>
    </location>
    <ligand>
        <name>Mg(2+)</name>
        <dbReference type="ChEBI" id="CHEBI:18420"/>
        <note>catalytic</note>
    </ligand>
</feature>
<feature type="binding site" description="in other chain" evidence="1">
    <location>
        <begin position="125"/>
        <end position="127"/>
    </location>
    <ligand>
        <name>substrate</name>
        <note>ligand shared between dimeric partners</note>
    </ligand>
</feature>
<feature type="binding site" description="in other chain" evidence="1">
    <location>
        <position position="154"/>
    </location>
    <ligand>
        <name>ADP</name>
        <dbReference type="ChEBI" id="CHEBI:456216"/>
        <note>allosteric activator; ligand shared between dimeric partners</note>
    </ligand>
</feature>
<feature type="binding site" evidence="1">
    <location>
        <position position="162"/>
    </location>
    <ligand>
        <name>substrate</name>
        <note>ligand shared between dimeric partners</note>
    </ligand>
</feature>
<feature type="binding site" description="in other chain" evidence="1">
    <location>
        <begin position="169"/>
        <end position="171"/>
    </location>
    <ligand>
        <name>substrate</name>
        <note>ligand shared between dimeric partners</note>
    </ligand>
</feature>
<feature type="binding site" description="in other chain" evidence="1">
    <location>
        <begin position="185"/>
        <end position="187"/>
    </location>
    <ligand>
        <name>ADP</name>
        <dbReference type="ChEBI" id="CHEBI:456216"/>
        <note>allosteric activator; ligand shared between dimeric partners</note>
    </ligand>
</feature>
<feature type="binding site" description="in other chain" evidence="1">
    <location>
        <position position="211"/>
    </location>
    <ligand>
        <name>ADP</name>
        <dbReference type="ChEBI" id="CHEBI:456216"/>
        <note>allosteric activator; ligand shared between dimeric partners</note>
    </ligand>
</feature>
<feature type="binding site" description="in other chain" evidence="1">
    <location>
        <begin position="213"/>
        <end position="215"/>
    </location>
    <ligand>
        <name>ADP</name>
        <dbReference type="ChEBI" id="CHEBI:456216"/>
        <note>allosteric activator; ligand shared between dimeric partners</note>
    </ligand>
</feature>
<feature type="binding site" description="in other chain" evidence="1">
    <location>
        <position position="222"/>
    </location>
    <ligand>
        <name>substrate</name>
        <note>ligand shared between dimeric partners</note>
    </ligand>
</feature>
<feature type="binding site" evidence="1">
    <location>
        <position position="243"/>
    </location>
    <ligand>
        <name>substrate</name>
        <note>ligand shared between dimeric partners</note>
    </ligand>
</feature>
<feature type="binding site" description="in other chain" evidence="1">
    <location>
        <begin position="249"/>
        <end position="252"/>
    </location>
    <ligand>
        <name>substrate</name>
        <note>ligand shared between dimeric partners</note>
    </ligand>
</feature>
<accession>A0AJ20</accession>
<comment type="function">
    <text evidence="1">Catalyzes the phosphorylation of D-fructose 6-phosphate to fructose 1,6-bisphosphate by ATP, the first committing step of glycolysis.</text>
</comment>
<comment type="catalytic activity">
    <reaction evidence="1">
        <text>beta-D-fructose 6-phosphate + ATP = beta-D-fructose 1,6-bisphosphate + ADP + H(+)</text>
        <dbReference type="Rhea" id="RHEA:16109"/>
        <dbReference type="ChEBI" id="CHEBI:15378"/>
        <dbReference type="ChEBI" id="CHEBI:30616"/>
        <dbReference type="ChEBI" id="CHEBI:32966"/>
        <dbReference type="ChEBI" id="CHEBI:57634"/>
        <dbReference type="ChEBI" id="CHEBI:456216"/>
        <dbReference type="EC" id="2.7.1.11"/>
    </reaction>
</comment>
<comment type="cofactor">
    <cofactor evidence="1">
        <name>Mg(2+)</name>
        <dbReference type="ChEBI" id="CHEBI:18420"/>
    </cofactor>
</comment>
<comment type="activity regulation">
    <text evidence="1">Allosterically activated by ADP and other diphosphonucleosides, and allosterically inhibited by phosphoenolpyruvate.</text>
</comment>
<comment type="pathway">
    <text evidence="1">Carbohydrate degradation; glycolysis; D-glyceraldehyde 3-phosphate and glycerone phosphate from D-glucose: step 3/4.</text>
</comment>
<comment type="subunit">
    <text evidence="1">Homotetramer.</text>
</comment>
<comment type="subcellular location">
    <subcellularLocation>
        <location evidence="1">Cytoplasm</location>
    </subcellularLocation>
</comment>
<comment type="similarity">
    <text evidence="1">Belongs to the phosphofructokinase type A (PFKA) family. ATP-dependent PFK group I subfamily. Prokaryotic clade 'B1' sub-subfamily.</text>
</comment>
<evidence type="ECO:0000255" key="1">
    <source>
        <dbReference type="HAMAP-Rule" id="MF_00339"/>
    </source>
</evidence>
<protein>
    <recommendedName>
        <fullName evidence="1">ATP-dependent 6-phosphofructokinase</fullName>
        <shortName evidence="1">ATP-PFK</shortName>
        <shortName evidence="1">Phosphofructokinase</shortName>
        <ecNumber evidence="1">2.7.1.11</ecNumber>
    </recommendedName>
    <alternativeName>
        <fullName evidence="1">Phosphohexokinase</fullName>
    </alternativeName>
</protein>
<organism>
    <name type="scientific">Listeria welshimeri serovar 6b (strain ATCC 35897 / DSM 20650 / CCUG 15529 / CIP 8149 / NCTC 11857 / SLCC 5334 / V8)</name>
    <dbReference type="NCBI Taxonomy" id="386043"/>
    <lineage>
        <taxon>Bacteria</taxon>
        <taxon>Bacillati</taxon>
        <taxon>Bacillota</taxon>
        <taxon>Bacilli</taxon>
        <taxon>Bacillales</taxon>
        <taxon>Listeriaceae</taxon>
        <taxon>Listeria</taxon>
    </lineage>
</organism>